<organism>
    <name type="scientific">Schizosaccharomyces pombe (strain 972 / ATCC 24843)</name>
    <name type="common">Fission yeast</name>
    <dbReference type="NCBI Taxonomy" id="284812"/>
    <lineage>
        <taxon>Eukaryota</taxon>
        <taxon>Fungi</taxon>
        <taxon>Dikarya</taxon>
        <taxon>Ascomycota</taxon>
        <taxon>Taphrinomycotina</taxon>
        <taxon>Schizosaccharomycetes</taxon>
        <taxon>Schizosaccharomycetales</taxon>
        <taxon>Schizosaccharomycetaceae</taxon>
        <taxon>Schizosaccharomyces</taxon>
    </lineage>
</organism>
<comment type="function">
    <text evidence="3 4">Calcium-permeable, cation-selective stretch-activated channel (SAC) that functions together with CCH1 to mediate calcium entry into cells. Required during mating.</text>
</comment>
<comment type="subcellular location">
    <subcellularLocation>
        <location evidence="1">Cell membrane</location>
        <topology evidence="2">Single-pass membrane protein</topology>
    </subcellularLocation>
</comment>
<reference key="1">
    <citation type="journal article" date="2000" name="Biochem. Biophys. Res. Commun.">
        <title>yam8(+), a Schizosaccharomyces pombe gene, is a potential homologue of the Saccharomyces cerevisiae MID1 gene encoding a stretch-activated Ca(2+)-permeable channel.</title>
        <authorList>
            <person name="Tasaka Y."/>
            <person name="Nakagawa Y."/>
            <person name="Sato C."/>
            <person name="Mino M."/>
            <person name="Uozumi N."/>
            <person name="Murata N."/>
            <person name="Muto S."/>
            <person name="Iida H."/>
        </authorList>
    </citation>
    <scope>NUCLEOTIDE SEQUENCE [GENOMIC DNA]</scope>
    <scope>FUNCTION</scope>
</reference>
<reference key="2">
    <citation type="journal article" date="2000" name="Mol. Gen. Genet.">
        <title>Schizosaccharomyces pombe ehs1p is involved in maintaining cell wall integrity and in calcium uptake.</title>
        <authorList>
            <person name="Carnero E."/>
            <person name="Ribas J.C."/>
            <person name="Garcia B."/>
            <person name="Duran A."/>
            <person name="Sanchez Y."/>
        </authorList>
    </citation>
    <scope>NUCLEOTIDE SEQUENCE [GENOMIC DNA]</scope>
    <scope>FUNCTION</scope>
</reference>
<reference key="3">
    <citation type="journal article" date="2002" name="Nature">
        <title>The genome sequence of Schizosaccharomyces pombe.</title>
        <authorList>
            <person name="Wood V."/>
            <person name="Gwilliam R."/>
            <person name="Rajandream M.A."/>
            <person name="Lyne M.H."/>
            <person name="Lyne R."/>
            <person name="Stewart A."/>
            <person name="Sgouros J.G."/>
            <person name="Peat N."/>
            <person name="Hayles J."/>
            <person name="Baker S.G."/>
            <person name="Basham D."/>
            <person name="Bowman S."/>
            <person name="Brooks K."/>
            <person name="Brown D."/>
            <person name="Brown S."/>
            <person name="Chillingworth T."/>
            <person name="Churcher C.M."/>
            <person name="Collins M."/>
            <person name="Connor R."/>
            <person name="Cronin A."/>
            <person name="Davis P."/>
            <person name="Feltwell T."/>
            <person name="Fraser A."/>
            <person name="Gentles S."/>
            <person name="Goble A."/>
            <person name="Hamlin N."/>
            <person name="Harris D.E."/>
            <person name="Hidalgo J."/>
            <person name="Hodgson G."/>
            <person name="Holroyd S."/>
            <person name="Hornsby T."/>
            <person name="Howarth S."/>
            <person name="Huckle E.J."/>
            <person name="Hunt S."/>
            <person name="Jagels K."/>
            <person name="James K.D."/>
            <person name="Jones L."/>
            <person name="Jones M."/>
            <person name="Leather S."/>
            <person name="McDonald S."/>
            <person name="McLean J."/>
            <person name="Mooney P."/>
            <person name="Moule S."/>
            <person name="Mungall K.L."/>
            <person name="Murphy L.D."/>
            <person name="Niblett D."/>
            <person name="Odell C."/>
            <person name="Oliver K."/>
            <person name="O'Neil S."/>
            <person name="Pearson D."/>
            <person name="Quail M.A."/>
            <person name="Rabbinowitsch E."/>
            <person name="Rutherford K.M."/>
            <person name="Rutter S."/>
            <person name="Saunders D."/>
            <person name="Seeger K."/>
            <person name="Sharp S."/>
            <person name="Skelton J."/>
            <person name="Simmonds M.N."/>
            <person name="Squares R."/>
            <person name="Squares S."/>
            <person name="Stevens K."/>
            <person name="Taylor K."/>
            <person name="Taylor R.G."/>
            <person name="Tivey A."/>
            <person name="Walsh S.V."/>
            <person name="Warren T."/>
            <person name="Whitehead S."/>
            <person name="Woodward J.R."/>
            <person name="Volckaert G."/>
            <person name="Aert R."/>
            <person name="Robben J."/>
            <person name="Grymonprez B."/>
            <person name="Weltjens I."/>
            <person name="Vanstreels E."/>
            <person name="Rieger M."/>
            <person name="Schaefer M."/>
            <person name="Mueller-Auer S."/>
            <person name="Gabel C."/>
            <person name="Fuchs M."/>
            <person name="Duesterhoeft A."/>
            <person name="Fritzc C."/>
            <person name="Holzer E."/>
            <person name="Moestl D."/>
            <person name="Hilbert H."/>
            <person name="Borzym K."/>
            <person name="Langer I."/>
            <person name="Beck A."/>
            <person name="Lehrach H."/>
            <person name="Reinhardt R."/>
            <person name="Pohl T.M."/>
            <person name="Eger P."/>
            <person name="Zimmermann W."/>
            <person name="Wedler H."/>
            <person name="Wambutt R."/>
            <person name="Purnelle B."/>
            <person name="Goffeau A."/>
            <person name="Cadieu E."/>
            <person name="Dreano S."/>
            <person name="Gloux S."/>
            <person name="Lelaure V."/>
            <person name="Mottier S."/>
            <person name="Galibert F."/>
            <person name="Aves S.J."/>
            <person name="Xiang Z."/>
            <person name="Hunt C."/>
            <person name="Moore K."/>
            <person name="Hurst S.M."/>
            <person name="Lucas M."/>
            <person name="Rochet M."/>
            <person name="Gaillardin C."/>
            <person name="Tallada V.A."/>
            <person name="Garzon A."/>
            <person name="Thode G."/>
            <person name="Daga R.R."/>
            <person name="Cruzado L."/>
            <person name="Jimenez J."/>
            <person name="Sanchez M."/>
            <person name="del Rey F."/>
            <person name="Benito J."/>
            <person name="Dominguez A."/>
            <person name="Revuelta J.L."/>
            <person name="Moreno S."/>
            <person name="Armstrong J."/>
            <person name="Forsburg S.L."/>
            <person name="Cerutti L."/>
            <person name="Lowe T."/>
            <person name="McCombie W.R."/>
            <person name="Paulsen I."/>
            <person name="Potashkin J."/>
            <person name="Shpakovski G.V."/>
            <person name="Ussery D."/>
            <person name="Barrell B.G."/>
            <person name="Nurse P."/>
        </authorList>
    </citation>
    <scope>NUCLEOTIDE SEQUENCE [LARGE SCALE GENOMIC DNA]</scope>
    <source>
        <strain>972 / ATCC 24843</strain>
    </source>
</reference>
<evidence type="ECO:0000250" key="1">
    <source>
        <dbReference type="UniProtKB" id="P41821"/>
    </source>
</evidence>
<evidence type="ECO:0000255" key="2"/>
<evidence type="ECO:0000269" key="3">
    <source>
    </source>
</evidence>
<evidence type="ECO:0000269" key="4">
    <source>
    </source>
</evidence>
<evidence type="ECO:0000305" key="5"/>
<evidence type="ECO:0000312" key="6">
    <source>
        <dbReference type="PomBase" id="SPAC1F5.08c"/>
    </source>
</evidence>
<protein>
    <recommendedName>
        <fullName evidence="5">Stretch-activated cation channel yam8</fullName>
    </recommendedName>
</protein>
<proteinExistence type="inferred from homology"/>
<keyword id="KW-0106">Calcium</keyword>
<keyword id="KW-0107">Calcium channel</keyword>
<keyword id="KW-0109">Calcium transport</keyword>
<keyword id="KW-1003">Cell membrane</keyword>
<keyword id="KW-0325">Glycoprotein</keyword>
<keyword id="KW-0407">Ion channel</keyword>
<keyword id="KW-0406">Ion transport</keyword>
<keyword id="KW-0472">Membrane</keyword>
<keyword id="KW-1185">Reference proteome</keyword>
<keyword id="KW-0732">Signal</keyword>
<keyword id="KW-0812">Transmembrane</keyword>
<keyword id="KW-1133">Transmembrane helix</keyword>
<keyword id="KW-0813">Transport</keyword>
<name>MID1_SCHPO</name>
<feature type="signal peptide" evidence="2">
    <location>
        <begin position="1"/>
        <end position="24"/>
    </location>
</feature>
<feature type="chain" id="PRO_0000021160" description="Stretch-activated cation channel yam8">
    <location>
        <begin position="25"/>
        <end position="486"/>
    </location>
</feature>
<feature type="topological domain" description="Extracellular" evidence="2">
    <location>
        <begin position="25"/>
        <end position="464"/>
    </location>
</feature>
<feature type="transmembrane region" description="Helical" evidence="2">
    <location>
        <begin position="465"/>
        <end position="485"/>
    </location>
</feature>
<feature type="topological domain" description="Cytoplasmic" evidence="2">
    <location>
        <position position="486"/>
    </location>
</feature>
<feature type="glycosylation site" description="N-linked (GlcNAc...) asparagine" evidence="2">
    <location>
        <position position="33"/>
    </location>
</feature>
<feature type="glycosylation site" description="N-linked (GlcNAc...) asparagine" evidence="2">
    <location>
        <position position="49"/>
    </location>
</feature>
<feature type="glycosylation site" description="N-linked (GlcNAc...) asparagine" evidence="2">
    <location>
        <position position="59"/>
    </location>
</feature>
<feature type="glycosylation site" description="N-linked (GlcNAc...) asparagine" evidence="2">
    <location>
        <position position="82"/>
    </location>
</feature>
<feature type="glycosylation site" description="N-linked (GlcNAc...) asparagine" evidence="2">
    <location>
        <position position="93"/>
    </location>
</feature>
<accession>Q10063</accession>
<dbReference type="EMBL" id="CU329670">
    <property type="protein sequence ID" value="CAA92236.1"/>
    <property type="molecule type" value="Genomic_DNA"/>
</dbReference>
<dbReference type="PIR" id="JC7212">
    <property type="entry name" value="JC7212"/>
</dbReference>
<dbReference type="PIR" id="T38087">
    <property type="entry name" value="T38087"/>
</dbReference>
<dbReference type="RefSeq" id="NP_592865.1">
    <property type="nucleotide sequence ID" value="NM_001018265.2"/>
</dbReference>
<dbReference type="BioGRID" id="278123">
    <property type="interactions" value="43"/>
</dbReference>
<dbReference type="FunCoup" id="Q10063">
    <property type="interactions" value="104"/>
</dbReference>
<dbReference type="STRING" id="284812.Q10063"/>
<dbReference type="TCDB" id="8.A.41.1.7">
    <property type="family name" value="the stretch-activated calcium channel auxiliary protein, mid1 (mid1) family"/>
</dbReference>
<dbReference type="GlyCosmos" id="Q10063">
    <property type="glycosylation" value="5 sites, No reported glycans"/>
</dbReference>
<dbReference type="PaxDb" id="4896-SPAC1F5.08c.1"/>
<dbReference type="EnsemblFungi" id="SPAC1F5.08c.1">
    <property type="protein sequence ID" value="SPAC1F5.08c.1:pep"/>
    <property type="gene ID" value="SPAC1F5.08c"/>
</dbReference>
<dbReference type="GeneID" id="2541627"/>
<dbReference type="KEGG" id="spo:2541627"/>
<dbReference type="PomBase" id="SPAC1F5.08c">
    <property type="gene designation" value="yam8"/>
</dbReference>
<dbReference type="VEuPathDB" id="FungiDB:SPAC1F5.08c"/>
<dbReference type="eggNOG" id="ENOG502QTEW">
    <property type="taxonomic scope" value="Eukaryota"/>
</dbReference>
<dbReference type="HOGENOM" id="CLU_018731_0_0_1"/>
<dbReference type="InParanoid" id="Q10063"/>
<dbReference type="OMA" id="PFAKEQF"/>
<dbReference type="PhylomeDB" id="Q10063"/>
<dbReference type="PRO" id="PR:Q10063"/>
<dbReference type="Proteomes" id="UP000002485">
    <property type="component" value="Chromosome I"/>
</dbReference>
<dbReference type="GO" id="GO:0016020">
    <property type="term" value="C:membrane"/>
    <property type="evidence" value="ECO:0000314"/>
    <property type="project" value="PomBase"/>
</dbReference>
<dbReference type="GO" id="GO:0005886">
    <property type="term" value="C:plasma membrane"/>
    <property type="evidence" value="ECO:0000316"/>
    <property type="project" value="PomBase"/>
</dbReference>
<dbReference type="GO" id="GO:0005262">
    <property type="term" value="F:calcium channel activity"/>
    <property type="evidence" value="ECO:0007669"/>
    <property type="project" value="UniProtKB-KW"/>
</dbReference>
<dbReference type="GO" id="GO:0098703">
    <property type="term" value="P:calcium ion import across plasma membrane"/>
    <property type="evidence" value="ECO:0000315"/>
    <property type="project" value="PomBase"/>
</dbReference>
<dbReference type="InterPro" id="IPR024338">
    <property type="entry name" value="MID1/Yam8"/>
</dbReference>
<dbReference type="PANTHER" id="PTHR39142:SF1">
    <property type="entry name" value="AEL197CP"/>
    <property type="match status" value="1"/>
</dbReference>
<dbReference type="PANTHER" id="PTHR39142">
    <property type="entry name" value="MID1P"/>
    <property type="match status" value="1"/>
</dbReference>
<dbReference type="Pfam" id="PF12929">
    <property type="entry name" value="Mid1"/>
    <property type="match status" value="1"/>
</dbReference>
<sequence>MFFFSTHLILKILFFWSITRNIFGATYTSLLLNNTINGNINDQSTAYYNLTWEGNTAYNVSLTLSTCTAFDGANDLMLYISNNTFDEALPLDNFTITASENGLATIFVTGYSPLYIAVSSAFSQFAPNFFVESGESTLEGNNVINYELAAGIDTPFSQYNATKFLFAQDTDFQAALLITGNLTTNETSIIPSYEIYVNPSNSTYDNTFNKFSSSFCAFQNNPSTVNTNNADRSMTLRGLGPFAKEQFYLKGLDPNVTYTAYLVEPNIGQPGGTVYPGVTFTTKTSPACQLIYDLQFCSEVAYAVPGNSSLFSASALAEWYDQQAYGYYQNFTYTLDLIPCNATSWSAYSLLKNCSDCANSYKNWLCASVIPRCADINDNSSYLIYKNYDSRYPLIDEVIQPGPYKEVLPCSYLCYSLASSCPLDLGFACPKAGYGLEFSYGEVSNVTGLITCNAPGVEFYESGSALLNISWRTFFISLIFWILFVE</sequence>
<gene>
    <name evidence="6" type="primary">yam8</name>
    <name evidence="6" type="synonym">ehs1</name>
    <name type="ORF">SPAC1F5.08c</name>
</gene>